<feature type="transit peptide" description="Mitochondrion" evidence="1">
    <location>
        <begin position="1"/>
        <end position="74"/>
    </location>
</feature>
<feature type="chain" id="PRO_0000363422" description="Pentatricopeptide repeat-containing protein At4g04790, mitochondrial">
    <location>
        <begin position="75"/>
        <end position="821"/>
    </location>
</feature>
<feature type="repeat" description="PPR 1">
    <location>
        <begin position="372"/>
        <end position="406"/>
    </location>
</feature>
<feature type="repeat" description="PPR 2">
    <location>
        <begin position="407"/>
        <end position="441"/>
    </location>
</feature>
<feature type="repeat" description="PPR 3">
    <location>
        <begin position="442"/>
        <end position="476"/>
    </location>
</feature>
<feature type="repeat" description="PPR 4">
    <location>
        <begin position="477"/>
        <end position="511"/>
    </location>
</feature>
<feature type="repeat" description="PPR 5">
    <location>
        <begin position="512"/>
        <end position="542"/>
    </location>
</feature>
<feature type="repeat" description="PPR 6">
    <location>
        <begin position="544"/>
        <end position="574"/>
    </location>
</feature>
<feature type="repeat" description="PPR 7">
    <location>
        <begin position="578"/>
        <end position="612"/>
    </location>
</feature>
<feature type="region of interest" description="Disordered" evidence="2">
    <location>
        <begin position="801"/>
        <end position="821"/>
    </location>
</feature>
<feature type="sequence conflict" description="In Ref. 3; BAD94316 and 4; AAQ82839." evidence="3" ref="3 4">
    <original>G</original>
    <variation>S</variation>
    <location>
        <position position="30"/>
    </location>
</feature>
<feature type="sequence conflict" description="In Ref. 3; BAD94316 and 4; AAQ82839." evidence="3" ref="3 4">
    <original>N</original>
    <variation>S</variation>
    <location>
        <position position="116"/>
    </location>
</feature>
<feature type="sequence conflict" description="In Ref. 3; BAD94316 and 4; AAQ82839." evidence="3" ref="3 4">
    <original>D</original>
    <variation>G</variation>
    <location>
        <position position="294"/>
    </location>
</feature>
<feature type="sequence conflict" description="In Ref. 3; BAD94316 and 4; AAQ82839." evidence="3" ref="3 4">
    <original>E</original>
    <variation>G</variation>
    <location>
        <position position="309"/>
    </location>
</feature>
<gene>
    <name type="ordered locus">At4g04790</name>
    <name type="ORF">T4B21.17</name>
</gene>
<evidence type="ECO:0000255" key="1"/>
<evidence type="ECO:0000256" key="2">
    <source>
        <dbReference type="SAM" id="MobiDB-lite"/>
    </source>
</evidence>
<evidence type="ECO:0000305" key="3"/>
<organism>
    <name type="scientific">Arabidopsis thaliana</name>
    <name type="common">Mouse-ear cress</name>
    <dbReference type="NCBI Taxonomy" id="3702"/>
    <lineage>
        <taxon>Eukaryota</taxon>
        <taxon>Viridiplantae</taxon>
        <taxon>Streptophyta</taxon>
        <taxon>Embryophyta</taxon>
        <taxon>Tracheophyta</taxon>
        <taxon>Spermatophyta</taxon>
        <taxon>Magnoliopsida</taxon>
        <taxon>eudicotyledons</taxon>
        <taxon>Gunneridae</taxon>
        <taxon>Pentapetalae</taxon>
        <taxon>rosids</taxon>
        <taxon>malvids</taxon>
        <taxon>Brassicales</taxon>
        <taxon>Brassicaceae</taxon>
        <taxon>Camelineae</taxon>
        <taxon>Arabidopsis</taxon>
    </lineage>
</organism>
<proteinExistence type="evidence at transcript level"/>
<dbReference type="EMBL" id="AF118223">
    <property type="protein sequence ID" value="AAD03456.1"/>
    <property type="status" value="ALT_SEQ"/>
    <property type="molecule type" value="Genomic_DNA"/>
</dbReference>
<dbReference type="EMBL" id="AL161501">
    <property type="protein sequence ID" value="CAB80844.1"/>
    <property type="status" value="ALT_SEQ"/>
    <property type="molecule type" value="Genomic_DNA"/>
</dbReference>
<dbReference type="EMBL" id="CP002687">
    <property type="protein sequence ID" value="AEE82426.1"/>
    <property type="molecule type" value="Genomic_DNA"/>
</dbReference>
<dbReference type="EMBL" id="BT010578">
    <property type="protein sequence ID" value="AAQ82839.1"/>
    <property type="molecule type" value="mRNA"/>
</dbReference>
<dbReference type="EMBL" id="AK221389">
    <property type="protein sequence ID" value="BAD94316.1"/>
    <property type="molecule type" value="mRNA"/>
</dbReference>
<dbReference type="PIR" id="C85060">
    <property type="entry name" value="C85060"/>
</dbReference>
<dbReference type="RefSeq" id="NP_192388.3">
    <property type="nucleotide sequence ID" value="NM_116717.4"/>
</dbReference>
<dbReference type="SMR" id="Q6NQ81"/>
<dbReference type="FunCoup" id="Q6NQ81">
    <property type="interactions" value="913"/>
</dbReference>
<dbReference type="iPTMnet" id="Q6NQ81"/>
<dbReference type="PaxDb" id="3702-AT4G04790.1"/>
<dbReference type="ProteomicsDB" id="249215"/>
<dbReference type="EnsemblPlants" id="AT4G04790.1">
    <property type="protein sequence ID" value="AT4G04790.1"/>
    <property type="gene ID" value="AT4G04790"/>
</dbReference>
<dbReference type="GeneID" id="825816"/>
<dbReference type="Gramene" id="AT4G04790.1">
    <property type="protein sequence ID" value="AT4G04790.1"/>
    <property type="gene ID" value="AT4G04790"/>
</dbReference>
<dbReference type="KEGG" id="ath:AT4G04790"/>
<dbReference type="Araport" id="AT4G04790"/>
<dbReference type="TAIR" id="AT4G04790"/>
<dbReference type="eggNOG" id="KOG4197">
    <property type="taxonomic scope" value="Eukaryota"/>
</dbReference>
<dbReference type="HOGENOM" id="CLU_013098_0_0_1"/>
<dbReference type="InParanoid" id="Q6NQ81"/>
<dbReference type="PhylomeDB" id="Q6NQ81"/>
<dbReference type="PRO" id="PR:Q6NQ81"/>
<dbReference type="Proteomes" id="UP000006548">
    <property type="component" value="Chromosome 4"/>
</dbReference>
<dbReference type="ExpressionAtlas" id="Q6NQ81">
    <property type="expression patterns" value="baseline and differential"/>
</dbReference>
<dbReference type="GO" id="GO:0005739">
    <property type="term" value="C:mitochondrion"/>
    <property type="evidence" value="ECO:0007669"/>
    <property type="project" value="UniProtKB-SubCell"/>
</dbReference>
<dbReference type="Gene3D" id="1.25.40.10">
    <property type="entry name" value="Tetratricopeptide repeat domain"/>
    <property type="match status" value="2"/>
</dbReference>
<dbReference type="InterPro" id="IPR002885">
    <property type="entry name" value="Pentatricopeptide_rpt"/>
</dbReference>
<dbReference type="InterPro" id="IPR033443">
    <property type="entry name" value="PROP1-like_PPR_dom"/>
</dbReference>
<dbReference type="InterPro" id="IPR011990">
    <property type="entry name" value="TPR-like_helical_dom_sf"/>
</dbReference>
<dbReference type="NCBIfam" id="TIGR00756">
    <property type="entry name" value="PPR"/>
    <property type="match status" value="2"/>
</dbReference>
<dbReference type="PANTHER" id="PTHR47262">
    <property type="entry name" value="OS02G0132600 PROTEIN"/>
    <property type="match status" value="1"/>
</dbReference>
<dbReference type="PANTHER" id="PTHR47262:SF2">
    <property type="entry name" value="PENTACOTRIPEPTIDE-REPEAT REGION OF PRORP DOMAIN-CONTAINING PROTEIN"/>
    <property type="match status" value="1"/>
</dbReference>
<dbReference type="Pfam" id="PF01535">
    <property type="entry name" value="PPR"/>
    <property type="match status" value="3"/>
</dbReference>
<dbReference type="Pfam" id="PF17177">
    <property type="entry name" value="PPR_long"/>
    <property type="match status" value="1"/>
</dbReference>
<dbReference type="PROSITE" id="PS51375">
    <property type="entry name" value="PPR"/>
    <property type="match status" value="7"/>
</dbReference>
<keyword id="KW-0496">Mitochondrion</keyword>
<keyword id="KW-1185">Reference proteome</keyword>
<keyword id="KW-0677">Repeat</keyword>
<keyword id="KW-0809">Transit peptide</keyword>
<name>PP304_ARATH</name>
<protein>
    <recommendedName>
        <fullName>Pentatricopeptide repeat-containing protein At4g04790, mitochondrial</fullName>
    </recommendedName>
</protein>
<sequence>MVVSKVNKSLLSSVFKSRIRPTGESSIASGNKDIAGTSQAVKDLLSSKNSSSDLEEASLQDRVSKLLHVTTSDKSSLEKNLFLKIPSFTTKIPYDISLRTKELSRERKERRVYKQNGLSRRFAKIFRDSAQKLGTEAMFGAFDRVAKEMSVTEYNAMIGVYLEHAEKSNDLDYALGHIEKAFELLKSMRDRGFLIEERVYGPLLGYLIGMDMVDEFHSFKDVIREASPGSVERLGYYEMLLWIHLGDGEKIEELCSTIDGDNGESLSVLQENYLLALCKKDQKYHLERLLEIVDITKVRSSDLLANIFEYLGRFSLDSVASRFLWELRESDEGVKNVSDLISIYSTCTPNPTVEDTILKFNKMHEELDVMPSSTSYEKLVKYSCDSNEVVTALDVVEKMGEAGLMISADILHSLLHAIDEVLEFDLVRRIHSIMCTKSVKPNTENFRSIIRLCTRIKDFEGAYNMLGNLKNFNLEPNSSMFNCILAGYFREKNVSSALMVVKQMKEAGVKPDSITFGYLINNCTQEDAITKYYEEMKQAGVQATKRIYMSLIDAYAASGKFEKAKQVLVDPDVPAINQNELKSVLISALASRGKWADALHIYEEMRKAECHVDPKSIISLIEYSDSKGELSTLVQLADDLQDDTSWIDGFFRMILFAVRNKKSSDIVDLLKRNKVRLLKKGIPVEAHFDEVFWAIAETEPSKVHLGMDLLRFMKDELGFVPSRKCLDFLLHACVNAKDLEHGLLVWKEYQSAAFPCNVLSFLRMYQVLLAAGDSEGAKALVSKIPKDDKDVQHIIEESQSAFSQAPNKKKPKKKMIVLSTK</sequence>
<accession>Q6NQ81</accession>
<accession>Q9M0Z7</accession>
<accession>Q9ZS94</accession>
<reference key="1">
    <citation type="journal article" date="1999" name="Nature">
        <title>Sequence and analysis of chromosome 4 of the plant Arabidopsis thaliana.</title>
        <authorList>
            <person name="Mayer K.F.X."/>
            <person name="Schueller C."/>
            <person name="Wambutt R."/>
            <person name="Murphy G."/>
            <person name="Volckaert G."/>
            <person name="Pohl T."/>
            <person name="Duesterhoeft A."/>
            <person name="Stiekema W."/>
            <person name="Entian K.-D."/>
            <person name="Terryn N."/>
            <person name="Harris B."/>
            <person name="Ansorge W."/>
            <person name="Brandt P."/>
            <person name="Grivell L.A."/>
            <person name="Rieger M."/>
            <person name="Weichselgartner M."/>
            <person name="de Simone V."/>
            <person name="Obermaier B."/>
            <person name="Mache R."/>
            <person name="Mueller M."/>
            <person name="Kreis M."/>
            <person name="Delseny M."/>
            <person name="Puigdomenech P."/>
            <person name="Watson M."/>
            <person name="Schmidtheini T."/>
            <person name="Reichert B."/>
            <person name="Portetelle D."/>
            <person name="Perez-Alonso M."/>
            <person name="Boutry M."/>
            <person name="Bancroft I."/>
            <person name="Vos P."/>
            <person name="Hoheisel J."/>
            <person name="Zimmermann W."/>
            <person name="Wedler H."/>
            <person name="Ridley P."/>
            <person name="Langham S.-A."/>
            <person name="McCullagh B."/>
            <person name="Bilham L."/>
            <person name="Robben J."/>
            <person name="van der Schueren J."/>
            <person name="Grymonprez B."/>
            <person name="Chuang Y.-J."/>
            <person name="Vandenbussche F."/>
            <person name="Braeken M."/>
            <person name="Weltjens I."/>
            <person name="Voet M."/>
            <person name="Bastiaens I."/>
            <person name="Aert R."/>
            <person name="Defoor E."/>
            <person name="Weitzenegger T."/>
            <person name="Bothe G."/>
            <person name="Ramsperger U."/>
            <person name="Hilbert H."/>
            <person name="Braun M."/>
            <person name="Holzer E."/>
            <person name="Brandt A."/>
            <person name="Peters S."/>
            <person name="van Staveren M."/>
            <person name="Dirkse W."/>
            <person name="Mooijman P."/>
            <person name="Klein Lankhorst R."/>
            <person name="Rose M."/>
            <person name="Hauf J."/>
            <person name="Koetter P."/>
            <person name="Berneiser S."/>
            <person name="Hempel S."/>
            <person name="Feldpausch M."/>
            <person name="Lamberth S."/>
            <person name="Van den Daele H."/>
            <person name="De Keyser A."/>
            <person name="Buysshaert C."/>
            <person name="Gielen J."/>
            <person name="Villarroel R."/>
            <person name="De Clercq R."/>
            <person name="van Montagu M."/>
            <person name="Rogers J."/>
            <person name="Cronin A."/>
            <person name="Quail M.A."/>
            <person name="Bray-Allen S."/>
            <person name="Clark L."/>
            <person name="Doggett J."/>
            <person name="Hall S."/>
            <person name="Kay M."/>
            <person name="Lennard N."/>
            <person name="McLay K."/>
            <person name="Mayes R."/>
            <person name="Pettett A."/>
            <person name="Rajandream M.A."/>
            <person name="Lyne M."/>
            <person name="Benes V."/>
            <person name="Rechmann S."/>
            <person name="Borkova D."/>
            <person name="Bloecker H."/>
            <person name="Scharfe M."/>
            <person name="Grimm M."/>
            <person name="Loehnert T.-H."/>
            <person name="Dose S."/>
            <person name="de Haan M."/>
            <person name="Maarse A.C."/>
            <person name="Schaefer M."/>
            <person name="Mueller-Auer S."/>
            <person name="Gabel C."/>
            <person name="Fuchs M."/>
            <person name="Fartmann B."/>
            <person name="Granderath K."/>
            <person name="Dauner D."/>
            <person name="Herzl A."/>
            <person name="Neumann S."/>
            <person name="Argiriou A."/>
            <person name="Vitale D."/>
            <person name="Liguori R."/>
            <person name="Piravandi E."/>
            <person name="Massenet O."/>
            <person name="Quigley F."/>
            <person name="Clabauld G."/>
            <person name="Muendlein A."/>
            <person name="Felber R."/>
            <person name="Schnabl S."/>
            <person name="Hiller R."/>
            <person name="Schmidt W."/>
            <person name="Lecharny A."/>
            <person name="Aubourg S."/>
            <person name="Chefdor F."/>
            <person name="Cooke R."/>
            <person name="Berger C."/>
            <person name="Monfort A."/>
            <person name="Casacuberta E."/>
            <person name="Gibbons T."/>
            <person name="Weber N."/>
            <person name="Vandenbol M."/>
            <person name="Bargues M."/>
            <person name="Terol J."/>
            <person name="Torres A."/>
            <person name="Perez-Perez A."/>
            <person name="Purnelle B."/>
            <person name="Bent E."/>
            <person name="Johnson S."/>
            <person name="Tacon D."/>
            <person name="Jesse T."/>
            <person name="Heijnen L."/>
            <person name="Schwarz S."/>
            <person name="Scholler P."/>
            <person name="Heber S."/>
            <person name="Francs P."/>
            <person name="Bielke C."/>
            <person name="Frishman D."/>
            <person name="Haase D."/>
            <person name="Lemcke K."/>
            <person name="Mewes H.-W."/>
            <person name="Stocker S."/>
            <person name="Zaccaria P."/>
            <person name="Bevan M."/>
            <person name="Wilson R.K."/>
            <person name="de la Bastide M."/>
            <person name="Habermann K."/>
            <person name="Parnell L."/>
            <person name="Dedhia N."/>
            <person name="Gnoj L."/>
            <person name="Schutz K."/>
            <person name="Huang E."/>
            <person name="Spiegel L."/>
            <person name="Sekhon M."/>
            <person name="Murray J."/>
            <person name="Sheet P."/>
            <person name="Cordes M."/>
            <person name="Abu-Threideh J."/>
            <person name="Stoneking T."/>
            <person name="Kalicki J."/>
            <person name="Graves T."/>
            <person name="Harmon G."/>
            <person name="Edwards J."/>
            <person name="Latreille P."/>
            <person name="Courtney L."/>
            <person name="Cloud J."/>
            <person name="Abbott A."/>
            <person name="Scott K."/>
            <person name="Johnson D."/>
            <person name="Minx P."/>
            <person name="Bentley D."/>
            <person name="Fulton B."/>
            <person name="Miller N."/>
            <person name="Greco T."/>
            <person name="Kemp K."/>
            <person name="Kramer J."/>
            <person name="Fulton L."/>
            <person name="Mardis E."/>
            <person name="Dante M."/>
            <person name="Pepin K."/>
            <person name="Hillier L.W."/>
            <person name="Nelson J."/>
            <person name="Spieth J."/>
            <person name="Ryan E."/>
            <person name="Andrews S."/>
            <person name="Geisel C."/>
            <person name="Layman D."/>
            <person name="Du H."/>
            <person name="Ali J."/>
            <person name="Berghoff A."/>
            <person name="Jones K."/>
            <person name="Drone K."/>
            <person name="Cotton M."/>
            <person name="Joshu C."/>
            <person name="Antonoiu B."/>
            <person name="Zidanic M."/>
            <person name="Strong C."/>
            <person name="Sun H."/>
            <person name="Lamar B."/>
            <person name="Yordan C."/>
            <person name="Ma P."/>
            <person name="Zhong J."/>
            <person name="Preston R."/>
            <person name="Vil D."/>
            <person name="Shekher M."/>
            <person name="Matero A."/>
            <person name="Shah R."/>
            <person name="Swaby I.K."/>
            <person name="O'Shaughnessy A."/>
            <person name="Rodriguez M."/>
            <person name="Hoffman J."/>
            <person name="Till S."/>
            <person name="Granat S."/>
            <person name="Shohdy N."/>
            <person name="Hasegawa A."/>
            <person name="Hameed A."/>
            <person name="Lodhi M."/>
            <person name="Johnson A."/>
            <person name="Chen E."/>
            <person name="Marra M.A."/>
            <person name="Martienssen R."/>
            <person name="McCombie W.R."/>
        </authorList>
    </citation>
    <scope>NUCLEOTIDE SEQUENCE [LARGE SCALE GENOMIC DNA]</scope>
    <source>
        <strain>cv. Columbia</strain>
    </source>
</reference>
<reference key="2">
    <citation type="journal article" date="2017" name="Plant J.">
        <title>Araport11: a complete reannotation of the Arabidopsis thaliana reference genome.</title>
        <authorList>
            <person name="Cheng C.Y."/>
            <person name="Krishnakumar V."/>
            <person name="Chan A.P."/>
            <person name="Thibaud-Nissen F."/>
            <person name="Schobel S."/>
            <person name="Town C.D."/>
        </authorList>
    </citation>
    <scope>GENOME REANNOTATION</scope>
    <source>
        <strain>cv. Columbia</strain>
    </source>
</reference>
<reference key="3">
    <citation type="journal article" date="2003" name="Science">
        <title>Empirical analysis of transcriptional activity in the Arabidopsis genome.</title>
        <authorList>
            <person name="Yamada K."/>
            <person name="Lim J."/>
            <person name="Dale J.M."/>
            <person name="Chen H."/>
            <person name="Shinn P."/>
            <person name="Palm C.J."/>
            <person name="Southwick A.M."/>
            <person name="Wu H.C."/>
            <person name="Kim C.J."/>
            <person name="Nguyen M."/>
            <person name="Pham P.K."/>
            <person name="Cheuk R.F."/>
            <person name="Karlin-Newmann G."/>
            <person name="Liu S.X."/>
            <person name="Lam B."/>
            <person name="Sakano H."/>
            <person name="Wu T."/>
            <person name="Yu G."/>
            <person name="Miranda M."/>
            <person name="Quach H.L."/>
            <person name="Tripp M."/>
            <person name="Chang C.H."/>
            <person name="Lee J.M."/>
            <person name="Toriumi M.J."/>
            <person name="Chan M.M."/>
            <person name="Tang C.C."/>
            <person name="Onodera C.S."/>
            <person name="Deng J.M."/>
            <person name="Akiyama K."/>
            <person name="Ansari Y."/>
            <person name="Arakawa T."/>
            <person name="Banh J."/>
            <person name="Banno F."/>
            <person name="Bowser L."/>
            <person name="Brooks S.Y."/>
            <person name="Carninci P."/>
            <person name="Chao Q."/>
            <person name="Choy N."/>
            <person name="Enju A."/>
            <person name="Goldsmith A.D."/>
            <person name="Gurjal M."/>
            <person name="Hansen N.F."/>
            <person name="Hayashizaki Y."/>
            <person name="Johnson-Hopson C."/>
            <person name="Hsuan V.W."/>
            <person name="Iida K."/>
            <person name="Karnes M."/>
            <person name="Khan S."/>
            <person name="Koesema E."/>
            <person name="Ishida J."/>
            <person name="Jiang P.X."/>
            <person name="Jones T."/>
            <person name="Kawai J."/>
            <person name="Kamiya A."/>
            <person name="Meyers C."/>
            <person name="Nakajima M."/>
            <person name="Narusaka M."/>
            <person name="Seki M."/>
            <person name="Sakurai T."/>
            <person name="Satou M."/>
            <person name="Tamse R."/>
            <person name="Vaysberg M."/>
            <person name="Wallender E.K."/>
            <person name="Wong C."/>
            <person name="Yamamura Y."/>
            <person name="Yuan S."/>
            <person name="Shinozaki K."/>
            <person name="Davis R.W."/>
            <person name="Theologis A."/>
            <person name="Ecker J.R."/>
        </authorList>
    </citation>
    <scope>NUCLEOTIDE SEQUENCE [LARGE SCALE MRNA]</scope>
    <source>
        <strain>cv. Columbia</strain>
    </source>
</reference>
<reference key="4">
    <citation type="submission" date="2005-03" db="EMBL/GenBank/DDBJ databases">
        <title>Large-scale analysis of RIKEN Arabidopsis full-length (RAFL) cDNAs.</title>
        <authorList>
            <person name="Totoki Y."/>
            <person name="Seki M."/>
            <person name="Ishida J."/>
            <person name="Nakajima M."/>
            <person name="Enju A."/>
            <person name="Kamiya A."/>
            <person name="Narusaka M."/>
            <person name="Shin-i T."/>
            <person name="Nakagawa M."/>
            <person name="Sakamoto N."/>
            <person name="Oishi K."/>
            <person name="Kohara Y."/>
            <person name="Kobayashi M."/>
            <person name="Toyoda A."/>
            <person name="Sakaki Y."/>
            <person name="Sakurai T."/>
            <person name="Iida K."/>
            <person name="Akiyama K."/>
            <person name="Satou M."/>
            <person name="Toyoda T."/>
            <person name="Konagaya A."/>
            <person name="Carninci P."/>
            <person name="Kawai J."/>
            <person name="Hayashizaki Y."/>
            <person name="Shinozaki K."/>
        </authorList>
    </citation>
    <scope>NUCLEOTIDE SEQUENCE [LARGE SCALE MRNA]</scope>
    <source>
        <strain>cv. Columbia</strain>
    </source>
</reference>
<reference key="5">
    <citation type="journal article" date="2004" name="Plant Cell">
        <title>Genome-wide analysis of Arabidopsis pentatricopeptide repeat proteins reveals their essential role in organelle biogenesis.</title>
        <authorList>
            <person name="Lurin C."/>
            <person name="Andres C."/>
            <person name="Aubourg S."/>
            <person name="Bellaoui M."/>
            <person name="Bitton F."/>
            <person name="Bruyere C."/>
            <person name="Caboche M."/>
            <person name="Debast C."/>
            <person name="Gualberto J."/>
            <person name="Hoffmann B."/>
            <person name="Lecharny A."/>
            <person name="Le Ret M."/>
            <person name="Martin-Magniette M.-L."/>
            <person name="Mireau H."/>
            <person name="Peeters N."/>
            <person name="Renou J.-P."/>
            <person name="Szurek B."/>
            <person name="Taconnat L."/>
            <person name="Small I."/>
        </authorList>
    </citation>
    <scope>GENE FAMILY</scope>
</reference>
<comment type="subcellular location">
    <subcellularLocation>
        <location evidence="3">Mitochondrion</location>
    </subcellularLocation>
</comment>
<comment type="similarity">
    <text evidence="3">Belongs to the PPR family. P subfamily.</text>
</comment>
<comment type="sequence caution" evidence="3">
    <conflict type="erroneous gene model prediction">
        <sequence resource="EMBL-CDS" id="AAD03456"/>
    </conflict>
</comment>
<comment type="sequence caution" evidence="3">
    <conflict type="erroneous gene model prediction">
        <sequence resource="EMBL-CDS" id="CAB80844"/>
    </conflict>
</comment>
<comment type="online information" name="Pentatricopeptide repeat proteins">
    <link uri="https://ppr.plantenergy.uwa.edu.au"/>
</comment>